<gene>
    <name evidence="1" type="primary">rpsB</name>
    <name type="ordered locus">Gura_3733</name>
</gene>
<accession>A5G7W8</accession>
<protein>
    <recommendedName>
        <fullName evidence="1">Small ribosomal subunit protein uS2</fullName>
    </recommendedName>
    <alternativeName>
        <fullName evidence="2">30S ribosomal protein S2</fullName>
    </alternativeName>
</protein>
<keyword id="KW-1185">Reference proteome</keyword>
<keyword id="KW-0687">Ribonucleoprotein</keyword>
<keyword id="KW-0689">Ribosomal protein</keyword>
<comment type="similarity">
    <text evidence="1">Belongs to the universal ribosomal protein uS2 family.</text>
</comment>
<sequence length="256" mass="28225">MSNITMKELLEAGVHFGHQTKRWNPKMKPYIFGARNGIYIIDLQKTVRLFKGAYNFVVDAAQSGETMLFVGTKKQAQDSVSEEAQRCGMFYVNDRWLGGMLTNFSTVKQSIDRLKRLDAMVADGTIEAYTKKEALQMEKDRQKLEKTLGGIKGMNKLPGVLFVIDPKNEEIAVSEAKKLGIPVVAIVDTNCDPDDIDYVIPGNDDAIRAIRLLTSKVADAMIEGGQARNIKLQTDTEGAEFAAEAEGVVEETAGEA</sequence>
<reference key="1">
    <citation type="submission" date="2007-05" db="EMBL/GenBank/DDBJ databases">
        <title>Complete sequence of Geobacter uraniireducens Rf4.</title>
        <authorList>
            <consortium name="US DOE Joint Genome Institute"/>
            <person name="Copeland A."/>
            <person name="Lucas S."/>
            <person name="Lapidus A."/>
            <person name="Barry K."/>
            <person name="Detter J.C."/>
            <person name="Glavina del Rio T."/>
            <person name="Hammon N."/>
            <person name="Israni S."/>
            <person name="Dalin E."/>
            <person name="Tice H."/>
            <person name="Pitluck S."/>
            <person name="Chertkov O."/>
            <person name="Brettin T."/>
            <person name="Bruce D."/>
            <person name="Han C."/>
            <person name="Schmutz J."/>
            <person name="Larimer F."/>
            <person name="Land M."/>
            <person name="Hauser L."/>
            <person name="Kyrpides N."/>
            <person name="Mikhailova N."/>
            <person name="Shelobolina E."/>
            <person name="Aklujkar M."/>
            <person name="Lovley D."/>
            <person name="Richardson P."/>
        </authorList>
    </citation>
    <scope>NUCLEOTIDE SEQUENCE [LARGE SCALE GENOMIC DNA]</scope>
    <source>
        <strain>ATCC BAA-1134 / JCM 13001 / Rf4</strain>
    </source>
</reference>
<dbReference type="EMBL" id="CP000698">
    <property type="protein sequence ID" value="ABQ27886.1"/>
    <property type="molecule type" value="Genomic_DNA"/>
</dbReference>
<dbReference type="RefSeq" id="WP_011940537.1">
    <property type="nucleotide sequence ID" value="NC_009483.1"/>
</dbReference>
<dbReference type="SMR" id="A5G7W8"/>
<dbReference type="STRING" id="351605.Gura_3733"/>
<dbReference type="KEGG" id="gur:Gura_3733"/>
<dbReference type="HOGENOM" id="CLU_040318_1_2_7"/>
<dbReference type="OrthoDB" id="9808036at2"/>
<dbReference type="Proteomes" id="UP000006695">
    <property type="component" value="Chromosome"/>
</dbReference>
<dbReference type="GO" id="GO:0022627">
    <property type="term" value="C:cytosolic small ribosomal subunit"/>
    <property type="evidence" value="ECO:0007669"/>
    <property type="project" value="TreeGrafter"/>
</dbReference>
<dbReference type="GO" id="GO:0003735">
    <property type="term" value="F:structural constituent of ribosome"/>
    <property type="evidence" value="ECO:0007669"/>
    <property type="project" value="InterPro"/>
</dbReference>
<dbReference type="GO" id="GO:0006412">
    <property type="term" value="P:translation"/>
    <property type="evidence" value="ECO:0007669"/>
    <property type="project" value="UniProtKB-UniRule"/>
</dbReference>
<dbReference type="CDD" id="cd01425">
    <property type="entry name" value="RPS2"/>
    <property type="match status" value="1"/>
</dbReference>
<dbReference type="FunFam" id="1.10.287.610:FF:000001">
    <property type="entry name" value="30S ribosomal protein S2"/>
    <property type="match status" value="1"/>
</dbReference>
<dbReference type="Gene3D" id="3.40.50.10490">
    <property type="entry name" value="Glucose-6-phosphate isomerase like protein, domain 1"/>
    <property type="match status" value="1"/>
</dbReference>
<dbReference type="Gene3D" id="1.10.287.610">
    <property type="entry name" value="Helix hairpin bin"/>
    <property type="match status" value="1"/>
</dbReference>
<dbReference type="HAMAP" id="MF_00291_B">
    <property type="entry name" value="Ribosomal_uS2_B"/>
    <property type="match status" value="1"/>
</dbReference>
<dbReference type="InterPro" id="IPR001865">
    <property type="entry name" value="Ribosomal_uS2"/>
</dbReference>
<dbReference type="InterPro" id="IPR005706">
    <property type="entry name" value="Ribosomal_uS2_bac/mit/plastid"/>
</dbReference>
<dbReference type="InterPro" id="IPR018130">
    <property type="entry name" value="Ribosomal_uS2_CS"/>
</dbReference>
<dbReference type="InterPro" id="IPR023591">
    <property type="entry name" value="Ribosomal_uS2_flav_dom_sf"/>
</dbReference>
<dbReference type="NCBIfam" id="TIGR01011">
    <property type="entry name" value="rpsB_bact"/>
    <property type="match status" value="1"/>
</dbReference>
<dbReference type="PANTHER" id="PTHR12534">
    <property type="entry name" value="30S RIBOSOMAL PROTEIN S2 PROKARYOTIC AND ORGANELLAR"/>
    <property type="match status" value="1"/>
</dbReference>
<dbReference type="PANTHER" id="PTHR12534:SF0">
    <property type="entry name" value="SMALL RIBOSOMAL SUBUNIT PROTEIN US2M"/>
    <property type="match status" value="1"/>
</dbReference>
<dbReference type="Pfam" id="PF00318">
    <property type="entry name" value="Ribosomal_S2"/>
    <property type="match status" value="1"/>
</dbReference>
<dbReference type="PRINTS" id="PR00395">
    <property type="entry name" value="RIBOSOMALS2"/>
</dbReference>
<dbReference type="SUPFAM" id="SSF52313">
    <property type="entry name" value="Ribosomal protein S2"/>
    <property type="match status" value="1"/>
</dbReference>
<dbReference type="PROSITE" id="PS00962">
    <property type="entry name" value="RIBOSOMAL_S2_1"/>
    <property type="match status" value="1"/>
</dbReference>
<dbReference type="PROSITE" id="PS00963">
    <property type="entry name" value="RIBOSOMAL_S2_2"/>
    <property type="match status" value="1"/>
</dbReference>
<proteinExistence type="inferred from homology"/>
<organism>
    <name type="scientific">Geotalea uraniireducens (strain Rf4)</name>
    <name type="common">Geobacter uraniireducens</name>
    <dbReference type="NCBI Taxonomy" id="351605"/>
    <lineage>
        <taxon>Bacteria</taxon>
        <taxon>Pseudomonadati</taxon>
        <taxon>Thermodesulfobacteriota</taxon>
        <taxon>Desulfuromonadia</taxon>
        <taxon>Geobacterales</taxon>
        <taxon>Geobacteraceae</taxon>
        <taxon>Geotalea</taxon>
    </lineage>
</organism>
<feature type="chain" id="PRO_1000078882" description="Small ribosomal subunit protein uS2">
    <location>
        <begin position="1"/>
        <end position="256"/>
    </location>
</feature>
<name>RS2_GEOUR</name>
<evidence type="ECO:0000255" key="1">
    <source>
        <dbReference type="HAMAP-Rule" id="MF_00291"/>
    </source>
</evidence>
<evidence type="ECO:0000305" key="2"/>